<sequence>MASQSQGIQQLLQAEKRAAEKVSEARKRKNRRLKQAKEEAQAEIEQYRLQREKEFKAKEAAALGSHGSCSSEVEKETREKMTVLQNYFEQNRDEVLDNLLAFVCDIRPEIHENYRING</sequence>
<protein>
    <recommendedName>
        <fullName>V-type proton ATPase subunit G 1</fullName>
        <shortName>V-ATPase subunit G 1</shortName>
    </recommendedName>
    <alternativeName>
        <fullName>V-ATPase 13 kDa subunit 1</fullName>
    </alternativeName>
    <alternativeName>
        <fullName>Vacuolar proton pump subunit G 1</fullName>
    </alternativeName>
</protein>
<reference key="1">
    <citation type="journal article" date="2005" name="Science">
        <title>The transcriptional landscape of the mammalian genome.</title>
        <authorList>
            <person name="Carninci P."/>
            <person name="Kasukawa T."/>
            <person name="Katayama S."/>
            <person name="Gough J."/>
            <person name="Frith M.C."/>
            <person name="Maeda N."/>
            <person name="Oyama R."/>
            <person name="Ravasi T."/>
            <person name="Lenhard B."/>
            <person name="Wells C."/>
            <person name="Kodzius R."/>
            <person name="Shimokawa K."/>
            <person name="Bajic V.B."/>
            <person name="Brenner S.E."/>
            <person name="Batalov S."/>
            <person name="Forrest A.R."/>
            <person name="Zavolan M."/>
            <person name="Davis M.J."/>
            <person name="Wilming L.G."/>
            <person name="Aidinis V."/>
            <person name="Allen J.E."/>
            <person name="Ambesi-Impiombato A."/>
            <person name="Apweiler R."/>
            <person name="Aturaliya R.N."/>
            <person name="Bailey T.L."/>
            <person name="Bansal M."/>
            <person name="Baxter L."/>
            <person name="Beisel K.W."/>
            <person name="Bersano T."/>
            <person name="Bono H."/>
            <person name="Chalk A.M."/>
            <person name="Chiu K.P."/>
            <person name="Choudhary V."/>
            <person name="Christoffels A."/>
            <person name="Clutterbuck D.R."/>
            <person name="Crowe M.L."/>
            <person name="Dalla E."/>
            <person name="Dalrymple B.P."/>
            <person name="de Bono B."/>
            <person name="Della Gatta G."/>
            <person name="di Bernardo D."/>
            <person name="Down T."/>
            <person name="Engstrom P."/>
            <person name="Fagiolini M."/>
            <person name="Faulkner G."/>
            <person name="Fletcher C.F."/>
            <person name="Fukushima T."/>
            <person name="Furuno M."/>
            <person name="Futaki S."/>
            <person name="Gariboldi M."/>
            <person name="Georgii-Hemming P."/>
            <person name="Gingeras T.R."/>
            <person name="Gojobori T."/>
            <person name="Green R.E."/>
            <person name="Gustincich S."/>
            <person name="Harbers M."/>
            <person name="Hayashi Y."/>
            <person name="Hensch T.K."/>
            <person name="Hirokawa N."/>
            <person name="Hill D."/>
            <person name="Huminiecki L."/>
            <person name="Iacono M."/>
            <person name="Ikeo K."/>
            <person name="Iwama A."/>
            <person name="Ishikawa T."/>
            <person name="Jakt M."/>
            <person name="Kanapin A."/>
            <person name="Katoh M."/>
            <person name="Kawasawa Y."/>
            <person name="Kelso J."/>
            <person name="Kitamura H."/>
            <person name="Kitano H."/>
            <person name="Kollias G."/>
            <person name="Krishnan S.P."/>
            <person name="Kruger A."/>
            <person name="Kummerfeld S.K."/>
            <person name="Kurochkin I.V."/>
            <person name="Lareau L.F."/>
            <person name="Lazarevic D."/>
            <person name="Lipovich L."/>
            <person name="Liu J."/>
            <person name="Liuni S."/>
            <person name="McWilliam S."/>
            <person name="Madan Babu M."/>
            <person name="Madera M."/>
            <person name="Marchionni L."/>
            <person name="Matsuda H."/>
            <person name="Matsuzawa S."/>
            <person name="Miki H."/>
            <person name="Mignone F."/>
            <person name="Miyake S."/>
            <person name="Morris K."/>
            <person name="Mottagui-Tabar S."/>
            <person name="Mulder N."/>
            <person name="Nakano N."/>
            <person name="Nakauchi H."/>
            <person name="Ng P."/>
            <person name="Nilsson R."/>
            <person name="Nishiguchi S."/>
            <person name="Nishikawa S."/>
            <person name="Nori F."/>
            <person name="Ohara O."/>
            <person name="Okazaki Y."/>
            <person name="Orlando V."/>
            <person name="Pang K.C."/>
            <person name="Pavan W.J."/>
            <person name="Pavesi G."/>
            <person name="Pesole G."/>
            <person name="Petrovsky N."/>
            <person name="Piazza S."/>
            <person name="Reed J."/>
            <person name="Reid J.F."/>
            <person name="Ring B.Z."/>
            <person name="Ringwald M."/>
            <person name="Rost B."/>
            <person name="Ruan Y."/>
            <person name="Salzberg S.L."/>
            <person name="Sandelin A."/>
            <person name="Schneider C."/>
            <person name="Schoenbach C."/>
            <person name="Sekiguchi K."/>
            <person name="Semple C.A."/>
            <person name="Seno S."/>
            <person name="Sessa L."/>
            <person name="Sheng Y."/>
            <person name="Shibata Y."/>
            <person name="Shimada H."/>
            <person name="Shimada K."/>
            <person name="Silva D."/>
            <person name="Sinclair B."/>
            <person name="Sperling S."/>
            <person name="Stupka E."/>
            <person name="Sugiura K."/>
            <person name="Sultana R."/>
            <person name="Takenaka Y."/>
            <person name="Taki K."/>
            <person name="Tammoja K."/>
            <person name="Tan S.L."/>
            <person name="Tang S."/>
            <person name="Taylor M.S."/>
            <person name="Tegner J."/>
            <person name="Teichmann S.A."/>
            <person name="Ueda H.R."/>
            <person name="van Nimwegen E."/>
            <person name="Verardo R."/>
            <person name="Wei C.L."/>
            <person name="Yagi K."/>
            <person name="Yamanishi H."/>
            <person name="Zabarovsky E."/>
            <person name="Zhu S."/>
            <person name="Zimmer A."/>
            <person name="Hide W."/>
            <person name="Bult C."/>
            <person name="Grimmond S.M."/>
            <person name="Teasdale R.D."/>
            <person name="Liu E.T."/>
            <person name="Brusic V."/>
            <person name="Quackenbush J."/>
            <person name="Wahlestedt C."/>
            <person name="Mattick J.S."/>
            <person name="Hume D.A."/>
            <person name="Kai C."/>
            <person name="Sasaki D."/>
            <person name="Tomaru Y."/>
            <person name="Fukuda S."/>
            <person name="Kanamori-Katayama M."/>
            <person name="Suzuki M."/>
            <person name="Aoki J."/>
            <person name="Arakawa T."/>
            <person name="Iida J."/>
            <person name="Imamura K."/>
            <person name="Itoh M."/>
            <person name="Kato T."/>
            <person name="Kawaji H."/>
            <person name="Kawagashira N."/>
            <person name="Kawashima T."/>
            <person name="Kojima M."/>
            <person name="Kondo S."/>
            <person name="Konno H."/>
            <person name="Nakano K."/>
            <person name="Ninomiya N."/>
            <person name="Nishio T."/>
            <person name="Okada M."/>
            <person name="Plessy C."/>
            <person name="Shibata K."/>
            <person name="Shiraki T."/>
            <person name="Suzuki S."/>
            <person name="Tagami M."/>
            <person name="Waki K."/>
            <person name="Watahiki A."/>
            <person name="Okamura-Oho Y."/>
            <person name="Suzuki H."/>
            <person name="Kawai J."/>
            <person name="Hayashizaki Y."/>
        </authorList>
    </citation>
    <scope>NUCLEOTIDE SEQUENCE [LARGE SCALE MRNA]</scope>
    <source>
        <strain>C57BL/6J</strain>
        <tissue>Embryo</tissue>
        <tissue>Pancreas</tissue>
        <tissue>Tongue</tissue>
    </source>
</reference>
<reference key="2">
    <citation type="journal article" date="2004" name="Genome Res.">
        <title>The status, quality, and expansion of the NIH full-length cDNA project: the Mammalian Gene Collection (MGC).</title>
        <authorList>
            <consortium name="The MGC Project Team"/>
        </authorList>
    </citation>
    <scope>NUCLEOTIDE SEQUENCE [LARGE SCALE MRNA]</scope>
</reference>
<reference key="3">
    <citation type="journal article" date="2003" name="Gene">
        <title>Diversity of mouse proton-translocating ATPase: presence of multiple isoforms of the C, d and G subunits.</title>
        <authorList>
            <person name="Sun-Wada G.-H."/>
            <person name="Yoshimizu T."/>
            <person name="Imai-Senga Y."/>
            <person name="Wada Y."/>
            <person name="Futai M."/>
        </authorList>
    </citation>
    <scope>TISSUE SPECIFICITY</scope>
</reference>
<reference key="4">
    <citation type="journal article" date="2010" name="Cell">
        <title>A tissue-specific atlas of mouse protein phosphorylation and expression.</title>
        <authorList>
            <person name="Huttlin E.L."/>
            <person name="Jedrychowski M.P."/>
            <person name="Elias J.E."/>
            <person name="Goswami T."/>
            <person name="Rad R."/>
            <person name="Beausoleil S.A."/>
            <person name="Villen J."/>
            <person name="Haas W."/>
            <person name="Sowa M.E."/>
            <person name="Gygi S.P."/>
        </authorList>
    </citation>
    <scope>IDENTIFICATION BY MASS SPECTROMETRY [LARGE SCALE ANALYSIS]</scope>
    <source>
        <tissue>Brain</tissue>
        <tissue>Brown adipose tissue</tissue>
        <tissue>Heart</tissue>
        <tissue>Kidney</tissue>
        <tissue>Liver</tissue>
        <tissue>Lung</tissue>
        <tissue>Pancreas</tissue>
        <tissue>Spleen</tissue>
        <tissue>Testis</tissue>
    </source>
</reference>
<reference key="5">
    <citation type="journal article" date="2018" name="Am. J. Physiol.">
        <title>H+-ATPase B1 subunit localizes to thick ascending limb and distal convoluted tubule of rodent and human kidney.</title>
        <authorList>
            <person name="Frische S."/>
            <person name="Chambrey R."/>
            <person name="Trepiccione F."/>
            <person name="Zamani R."/>
            <person name="Marcussen N."/>
            <person name="Alexander R.T."/>
            <person name="Skjoedt K."/>
            <person name="Svenningsen P."/>
            <person name="Dimke H."/>
        </authorList>
    </citation>
    <scope>SUBCELLULAR LOCATION</scope>
    <scope>TISSUE SPECIFICITY</scope>
</reference>
<keyword id="KW-0007">Acetylation</keyword>
<keyword id="KW-1003">Cell membrane</keyword>
<keyword id="KW-0375">Hydrogen ion transport</keyword>
<keyword id="KW-0406">Ion transport</keyword>
<keyword id="KW-0472">Membrane</keyword>
<keyword id="KW-1185">Reference proteome</keyword>
<keyword id="KW-0813">Transport</keyword>
<dbReference type="EMBL" id="AK010131">
    <property type="protein sequence ID" value="BAB26720.1"/>
    <property type="molecule type" value="mRNA"/>
</dbReference>
<dbReference type="EMBL" id="AK003563">
    <property type="protein sequence ID" value="BAB22859.1"/>
    <property type="molecule type" value="mRNA"/>
</dbReference>
<dbReference type="EMBL" id="AK007596">
    <property type="protein sequence ID" value="BAB25127.1"/>
    <property type="molecule type" value="mRNA"/>
</dbReference>
<dbReference type="EMBL" id="BC003429">
    <property type="protein sequence ID" value="AAH03429.1"/>
    <property type="molecule type" value="mRNA"/>
</dbReference>
<dbReference type="CCDS" id="CCDS18260.1"/>
<dbReference type="RefSeq" id="NP_077135.1">
    <property type="nucleotide sequence ID" value="NM_024173.2"/>
</dbReference>
<dbReference type="SMR" id="Q9CR51"/>
<dbReference type="BioGRID" id="211359">
    <property type="interactions" value="11"/>
</dbReference>
<dbReference type="FunCoup" id="Q9CR51">
    <property type="interactions" value="2270"/>
</dbReference>
<dbReference type="IntAct" id="Q9CR51">
    <property type="interactions" value="1"/>
</dbReference>
<dbReference type="MINT" id="Q9CR51"/>
<dbReference type="STRING" id="10090.ENSMUSP00000048770"/>
<dbReference type="TCDB" id="3.A.2.2.6">
    <property type="family name" value="the h+- or na+-translocating f-type, v-type and a-type atpase (f-atpase) superfamily"/>
</dbReference>
<dbReference type="GlyGen" id="Q9CR51">
    <property type="glycosylation" value="1 site, 1 O-linked glycan (1 site)"/>
</dbReference>
<dbReference type="iPTMnet" id="Q9CR51"/>
<dbReference type="PhosphoSitePlus" id="Q9CR51"/>
<dbReference type="SwissPalm" id="Q9CR51"/>
<dbReference type="jPOST" id="Q9CR51"/>
<dbReference type="PaxDb" id="10090-ENSMUSP00000048770"/>
<dbReference type="ProteomicsDB" id="300193"/>
<dbReference type="Pumba" id="Q9CR51"/>
<dbReference type="Antibodypedia" id="3900">
    <property type="antibodies" value="151 antibodies from 25 providers"/>
</dbReference>
<dbReference type="DNASU" id="66290"/>
<dbReference type="Ensembl" id="ENSMUST00000035301.7">
    <property type="protein sequence ID" value="ENSMUSP00000048770.7"/>
    <property type="gene ID" value="ENSMUSG00000039105.7"/>
</dbReference>
<dbReference type="GeneID" id="66290"/>
<dbReference type="KEGG" id="mmu:66290"/>
<dbReference type="UCSC" id="uc008tgq.2">
    <property type="organism name" value="mouse"/>
</dbReference>
<dbReference type="AGR" id="MGI:1913540"/>
<dbReference type="CTD" id="9550"/>
<dbReference type="MGI" id="MGI:1913540">
    <property type="gene designation" value="Atp6v1g1"/>
</dbReference>
<dbReference type="VEuPathDB" id="HostDB:ENSMUSG00000039105"/>
<dbReference type="eggNOG" id="KOG1772">
    <property type="taxonomic scope" value="Eukaryota"/>
</dbReference>
<dbReference type="GeneTree" id="ENSGT00940000154399"/>
<dbReference type="HOGENOM" id="CLU_125101_1_1_1"/>
<dbReference type="InParanoid" id="Q9CR51"/>
<dbReference type="OMA" id="ARKYRQD"/>
<dbReference type="OrthoDB" id="250802at2759"/>
<dbReference type="PhylomeDB" id="Q9CR51"/>
<dbReference type="TreeFam" id="TF313777"/>
<dbReference type="Reactome" id="R-MMU-1222556">
    <property type="pathway name" value="ROS and RNS production in phagocytes"/>
</dbReference>
<dbReference type="Reactome" id="R-MMU-77387">
    <property type="pathway name" value="Insulin receptor recycling"/>
</dbReference>
<dbReference type="Reactome" id="R-MMU-917977">
    <property type="pathway name" value="Transferrin endocytosis and recycling"/>
</dbReference>
<dbReference type="Reactome" id="R-MMU-9639288">
    <property type="pathway name" value="Amino acids regulate mTORC1"/>
</dbReference>
<dbReference type="Reactome" id="R-MMU-983712">
    <property type="pathway name" value="Ion channel transport"/>
</dbReference>
<dbReference type="BioGRID-ORCS" id="66290">
    <property type="hits" value="25 hits in 77 CRISPR screens"/>
</dbReference>
<dbReference type="CD-CODE" id="CE726F99">
    <property type="entry name" value="Postsynaptic density"/>
</dbReference>
<dbReference type="ChiTaRS" id="Atp6v1g1">
    <property type="organism name" value="mouse"/>
</dbReference>
<dbReference type="PRO" id="PR:Q9CR51"/>
<dbReference type="Proteomes" id="UP000000589">
    <property type="component" value="Chromosome 4"/>
</dbReference>
<dbReference type="RNAct" id="Q9CR51">
    <property type="molecule type" value="protein"/>
</dbReference>
<dbReference type="Bgee" id="ENSMUSG00000039105">
    <property type="expression patterns" value="Expressed in granulocyte and 127 other cell types or tissues"/>
</dbReference>
<dbReference type="ExpressionAtlas" id="Q9CR51">
    <property type="expression patterns" value="baseline and differential"/>
</dbReference>
<dbReference type="GO" id="GO:0016324">
    <property type="term" value="C:apical plasma membrane"/>
    <property type="evidence" value="ECO:0007669"/>
    <property type="project" value="UniProtKB-SubCell"/>
</dbReference>
<dbReference type="GO" id="GO:1904949">
    <property type="term" value="C:ATPase complex"/>
    <property type="evidence" value="ECO:0000314"/>
    <property type="project" value="MGI"/>
</dbReference>
<dbReference type="GO" id="GO:0005829">
    <property type="term" value="C:cytosol"/>
    <property type="evidence" value="ECO:0000314"/>
    <property type="project" value="UniProtKB"/>
</dbReference>
<dbReference type="GO" id="GO:0005765">
    <property type="term" value="C:lysosomal membrane"/>
    <property type="evidence" value="ECO:0000314"/>
    <property type="project" value="MGI"/>
</dbReference>
<dbReference type="GO" id="GO:0005886">
    <property type="term" value="C:plasma membrane"/>
    <property type="evidence" value="ECO:0000314"/>
    <property type="project" value="UniProtKB"/>
</dbReference>
<dbReference type="GO" id="GO:0098793">
    <property type="term" value="C:presynapse"/>
    <property type="evidence" value="ECO:0007669"/>
    <property type="project" value="GOC"/>
</dbReference>
<dbReference type="GO" id="GO:0033176">
    <property type="term" value="C:proton-transporting V-type ATPase complex"/>
    <property type="evidence" value="ECO:0000314"/>
    <property type="project" value="MGI"/>
</dbReference>
<dbReference type="GO" id="GO:0033180">
    <property type="term" value="C:proton-transporting V-type ATPase, V1 domain"/>
    <property type="evidence" value="ECO:0000314"/>
    <property type="project" value="MGI"/>
</dbReference>
<dbReference type="GO" id="GO:0016471">
    <property type="term" value="C:vacuolar proton-transporting V-type ATPase complex"/>
    <property type="evidence" value="ECO:0000353"/>
    <property type="project" value="MGI"/>
</dbReference>
<dbReference type="GO" id="GO:0000221">
    <property type="term" value="C:vacuolar proton-transporting V-type ATPase, V1 domain"/>
    <property type="evidence" value="ECO:0000250"/>
    <property type="project" value="UniProtKB"/>
</dbReference>
<dbReference type="GO" id="GO:0016887">
    <property type="term" value="F:ATP hydrolysis activity"/>
    <property type="evidence" value="ECO:0000314"/>
    <property type="project" value="MGI"/>
</dbReference>
<dbReference type="GO" id="GO:0051117">
    <property type="term" value="F:ATPase binding"/>
    <property type="evidence" value="ECO:0007669"/>
    <property type="project" value="Ensembl"/>
</dbReference>
<dbReference type="GO" id="GO:0046961">
    <property type="term" value="F:proton-transporting ATPase activity, rotational mechanism"/>
    <property type="evidence" value="ECO:0000314"/>
    <property type="project" value="MGI"/>
</dbReference>
<dbReference type="GO" id="GO:0036295">
    <property type="term" value="P:cellular response to increased oxygen levels"/>
    <property type="evidence" value="ECO:0000250"/>
    <property type="project" value="UniProtKB"/>
</dbReference>
<dbReference type="GO" id="GO:0006879">
    <property type="term" value="P:intracellular iron ion homeostasis"/>
    <property type="evidence" value="ECO:0000250"/>
    <property type="project" value="UniProtKB"/>
</dbReference>
<dbReference type="GO" id="GO:0097401">
    <property type="term" value="P:synaptic vesicle lumen acidification"/>
    <property type="evidence" value="ECO:0000314"/>
    <property type="project" value="SynGO"/>
</dbReference>
<dbReference type="FunFam" id="1.20.5.2950:FF:000001">
    <property type="entry name" value="V-type proton ATPase subunit G"/>
    <property type="match status" value="1"/>
</dbReference>
<dbReference type="FunFam" id="1.20.5.620:FF:000004">
    <property type="entry name" value="V-type proton ATPase subunit G"/>
    <property type="match status" value="1"/>
</dbReference>
<dbReference type="Gene3D" id="1.20.5.2950">
    <property type="match status" value="1"/>
</dbReference>
<dbReference type="InterPro" id="IPR005124">
    <property type="entry name" value="V-ATPase_G"/>
</dbReference>
<dbReference type="NCBIfam" id="TIGR01147">
    <property type="entry name" value="V_ATP_synt_G"/>
    <property type="match status" value="1"/>
</dbReference>
<dbReference type="PANTHER" id="PTHR12713:SF12">
    <property type="entry name" value="V-TYPE PROTON ATPASE SUBUNIT G 1"/>
    <property type="match status" value="1"/>
</dbReference>
<dbReference type="PANTHER" id="PTHR12713">
    <property type="entry name" value="VACUOLAR ATP SYNTHASE SUBUNIT G"/>
    <property type="match status" value="1"/>
</dbReference>
<dbReference type="Pfam" id="PF03179">
    <property type="entry name" value="V-ATPase_G"/>
    <property type="match status" value="1"/>
</dbReference>
<proteinExistence type="evidence at protein level"/>
<organism>
    <name type="scientific">Mus musculus</name>
    <name type="common">Mouse</name>
    <dbReference type="NCBI Taxonomy" id="10090"/>
    <lineage>
        <taxon>Eukaryota</taxon>
        <taxon>Metazoa</taxon>
        <taxon>Chordata</taxon>
        <taxon>Craniata</taxon>
        <taxon>Vertebrata</taxon>
        <taxon>Euteleostomi</taxon>
        <taxon>Mammalia</taxon>
        <taxon>Eutheria</taxon>
        <taxon>Euarchontoglires</taxon>
        <taxon>Glires</taxon>
        <taxon>Rodentia</taxon>
        <taxon>Myomorpha</taxon>
        <taxon>Muroidea</taxon>
        <taxon>Muridae</taxon>
        <taxon>Murinae</taxon>
        <taxon>Mus</taxon>
        <taxon>Mus</taxon>
    </lineage>
</organism>
<feature type="initiator methionine" description="Removed" evidence="1">
    <location>
        <position position="1"/>
    </location>
</feature>
<feature type="chain" id="PRO_0000192898" description="V-type proton ATPase subunit G 1">
    <location>
        <begin position="2"/>
        <end position="118"/>
    </location>
</feature>
<feature type="modified residue" description="N-acetylalanine" evidence="1">
    <location>
        <position position="2"/>
    </location>
</feature>
<gene>
    <name type="primary">Atp6v1g1</name>
    <name type="synonym">Atp6g1</name>
</gene>
<evidence type="ECO:0000250" key="1">
    <source>
        <dbReference type="UniProtKB" id="O75348"/>
    </source>
</evidence>
<evidence type="ECO:0000269" key="2">
    <source>
    </source>
</evidence>
<evidence type="ECO:0000269" key="3">
    <source>
    </source>
</evidence>
<evidence type="ECO:0000305" key="4"/>
<accession>Q9CR51</accession>
<name>VATG1_MOUSE</name>
<comment type="function">
    <text evidence="1">Subunit of the V1 complex of vacuolar(H+)-ATPase (V-ATPase), a multisubunit enzyme composed of a peripheral complex (V1) that hydrolyzes ATP and a membrane integral complex (V0) that translocates protons (By similarity). V-ATPase is responsible for acidifying and maintaining the pH of intracellular compartments and in some cell types, is targeted to the plasma membrane, where it is responsible for acidifying the extracellular environment (By similarity). In aerobic conditions, involved in intracellular iron homeostasis, thus triggering the activity of Fe(2+) prolyl hydroxylase (PHD) enzymes, and leading to HIF1A hydroxylation and subsequent proteasomal degradation (By similarity).</text>
</comment>
<comment type="subunit">
    <text evidence="1">V-ATPase is a heteromultimeric enzyme made up of two complexes: the ATP-hydrolytic V1 complex and the proton translocation V0 complex (By similarity). The V1 complex consists of three catalytic AB heterodimers that form a heterohexamer, three peripheral stalks each consisting of EG heterodimers, one central rotor including subunits D and F, and the regulatory subunits C and H (By similarity). The proton translocation complex V0 consists of the proton transport subunit a, a ring of proteolipid subunits c9c'', rotary subunit d, subunits e and f, and the accessory subunits ATP6AP1/Ac45 and ATP6AP2/PRR (By similarity).</text>
</comment>
<comment type="subcellular location">
    <subcellularLocation>
        <location evidence="3">Apical cell membrane</location>
    </subcellularLocation>
</comment>
<comment type="tissue specificity">
    <text evidence="2 3">Kidney; localizes to early distal nephron, encompassing thick ascending limbs and distal convoluted tubules (at protein level) (PubMed:29993276). Ubiquitous (PubMed:12527205).</text>
</comment>
<comment type="similarity">
    <text evidence="4">Belongs to the V-ATPase G subunit family.</text>
</comment>